<proteinExistence type="evidence at transcript level"/>
<name>PR12_HORVU</name>
<evidence type="ECO:0000250" key="1"/>
<evidence type="ECO:0000305" key="2"/>
<keyword id="KW-1015">Disulfide bond</keyword>
<keyword id="KW-0568">Pathogenesis-related protein</keyword>
<keyword id="KW-0611">Plant defense</keyword>
<keyword id="KW-0873">Pyrrolidone carboxylic acid</keyword>
<keyword id="KW-0732">Signal</keyword>
<dbReference type="EMBL" id="Z26320">
    <property type="protein sequence ID" value="CAA81229.1"/>
    <property type="molecule type" value="mRNA"/>
</dbReference>
<dbReference type="PIR" id="S52627">
    <property type="entry name" value="S52627"/>
</dbReference>
<dbReference type="SMR" id="P35792"/>
<dbReference type="ExpressionAtlas" id="P35792">
    <property type="expression patterns" value="baseline and differential"/>
</dbReference>
<dbReference type="GO" id="GO:0005576">
    <property type="term" value="C:extracellular region"/>
    <property type="evidence" value="ECO:0007669"/>
    <property type="project" value="InterPro"/>
</dbReference>
<dbReference type="GO" id="GO:0006952">
    <property type="term" value="P:defense response"/>
    <property type="evidence" value="ECO:0007669"/>
    <property type="project" value="UniProtKB-KW"/>
</dbReference>
<dbReference type="CDD" id="cd05381">
    <property type="entry name" value="CAP_PR-1"/>
    <property type="match status" value="1"/>
</dbReference>
<dbReference type="FunFam" id="3.40.33.10:FF:000009">
    <property type="entry name" value="Pathogenesis-related protein 1"/>
    <property type="match status" value="1"/>
</dbReference>
<dbReference type="Gene3D" id="3.40.33.10">
    <property type="entry name" value="CAP"/>
    <property type="match status" value="1"/>
</dbReference>
<dbReference type="InterPro" id="IPR018244">
    <property type="entry name" value="Allrgn_V5/Tpx1_CS"/>
</dbReference>
<dbReference type="InterPro" id="IPR014044">
    <property type="entry name" value="CAP_dom"/>
</dbReference>
<dbReference type="InterPro" id="IPR035940">
    <property type="entry name" value="CAP_sf"/>
</dbReference>
<dbReference type="InterPro" id="IPR001283">
    <property type="entry name" value="CRISP-related"/>
</dbReference>
<dbReference type="InterPro" id="IPR002413">
    <property type="entry name" value="V5_allergen-like"/>
</dbReference>
<dbReference type="PANTHER" id="PTHR10334">
    <property type="entry name" value="CYSTEINE-RICH SECRETORY PROTEIN-RELATED"/>
    <property type="match status" value="1"/>
</dbReference>
<dbReference type="Pfam" id="PF00188">
    <property type="entry name" value="CAP"/>
    <property type="match status" value="1"/>
</dbReference>
<dbReference type="PRINTS" id="PR00838">
    <property type="entry name" value="V5ALLERGEN"/>
</dbReference>
<dbReference type="PRINTS" id="PR00837">
    <property type="entry name" value="V5TPXLIKE"/>
</dbReference>
<dbReference type="SMART" id="SM00198">
    <property type="entry name" value="SCP"/>
    <property type="match status" value="1"/>
</dbReference>
<dbReference type="SUPFAM" id="SSF55797">
    <property type="entry name" value="PR-1-like"/>
    <property type="match status" value="1"/>
</dbReference>
<dbReference type="PROSITE" id="PS01009">
    <property type="entry name" value="CRISP_1"/>
    <property type="match status" value="1"/>
</dbReference>
<dbReference type="PROSITE" id="PS01010">
    <property type="entry name" value="CRISP_2"/>
    <property type="match status" value="1"/>
</dbReference>
<reference key="1">
    <citation type="journal article" date="1994" name="Plant Mol. Biol.">
        <title>Gene family encoding basic pathogenesis-related 1 proteins in barley.</title>
        <authorList>
            <person name="Mouradov A."/>
            <person name="Mouradova E."/>
            <person name="Scott K.J."/>
        </authorList>
    </citation>
    <scope>NUCLEOTIDE SEQUENCE [MRNA]</scope>
    <source>
        <strain>cv. Psaknon resistant</strain>
        <tissue>Leaf</tissue>
    </source>
</reference>
<accession>P35792</accession>
<feature type="signal peptide" evidence="1">
    <location>
        <begin position="1"/>
        <end position="24"/>
    </location>
</feature>
<feature type="chain" id="PRO_0000006306" description="Pathogenesis-related protein PRB1-2">
    <location>
        <begin position="25"/>
        <end position="164"/>
    </location>
</feature>
<feature type="domain" description="SCP">
    <location>
        <begin position="34"/>
        <end position="152"/>
    </location>
</feature>
<feature type="modified residue" description="Pyrrolidone carboxylic acid" evidence="1">
    <location>
        <position position="25"/>
    </location>
</feature>
<feature type="disulfide bond" evidence="1">
    <location>
        <begin position="68"/>
        <end position="140"/>
    </location>
</feature>
<feature type="disulfide bond" evidence="1">
    <location>
        <begin position="113"/>
        <end position="119"/>
    </location>
</feature>
<feature type="disulfide bond" evidence="1">
    <location>
        <begin position="135"/>
        <end position="150"/>
    </location>
</feature>
<sequence length="164" mass="17679">MQTPKLAILLALAMAAAMVNLSQAQNSPQDYVSPHNAARSAVGVGAVSWSTKLQAFAQNYANQRINDCKLQHSGGPYGENIFWGSAGADWKAADAVNSWVNEKKDYNYGSNTCAAGKVCGHYTQVVWRASTSIGCARVVCNNNRGVFITCNYEPRGNIVGQKPY</sequence>
<comment type="function">
    <text>Probably involved in the defense reaction of plants against pathogens.</text>
</comment>
<comment type="similarity">
    <text evidence="2">Belongs to the CRISP family.</text>
</comment>
<organism>
    <name type="scientific">Hordeum vulgare</name>
    <name type="common">Barley</name>
    <dbReference type="NCBI Taxonomy" id="4513"/>
    <lineage>
        <taxon>Eukaryota</taxon>
        <taxon>Viridiplantae</taxon>
        <taxon>Streptophyta</taxon>
        <taxon>Embryophyta</taxon>
        <taxon>Tracheophyta</taxon>
        <taxon>Spermatophyta</taxon>
        <taxon>Magnoliopsida</taxon>
        <taxon>Liliopsida</taxon>
        <taxon>Poales</taxon>
        <taxon>Poaceae</taxon>
        <taxon>BOP clade</taxon>
        <taxon>Pooideae</taxon>
        <taxon>Triticodae</taxon>
        <taxon>Triticeae</taxon>
        <taxon>Hordeinae</taxon>
        <taxon>Hordeum</taxon>
    </lineage>
</organism>
<protein>
    <recommendedName>
        <fullName>Pathogenesis-related protein PRB1-2</fullName>
    </recommendedName>
</protein>